<accession>P0A9X5</accession>
<accession>P13519</accession>
<accession>P76678</accession>
<evidence type="ECO:0000255" key="1">
    <source>
        <dbReference type="HAMAP-Rule" id="MF_02207"/>
    </source>
</evidence>
<evidence type="ECO:0000305" key="2"/>
<dbReference type="EMBL" id="AE014075">
    <property type="protein sequence ID" value="AAN82446.1"/>
    <property type="status" value="ALT_INIT"/>
    <property type="molecule type" value="Genomic_DNA"/>
</dbReference>
<dbReference type="RefSeq" id="WP_000913396.1">
    <property type="nucleotide sequence ID" value="NZ_CP051263.1"/>
</dbReference>
<dbReference type="SMR" id="P0A9X5"/>
<dbReference type="STRING" id="199310.c4006"/>
<dbReference type="GeneID" id="98390376"/>
<dbReference type="KEGG" id="ecc:c4006"/>
<dbReference type="eggNOG" id="COG1077">
    <property type="taxonomic scope" value="Bacteria"/>
</dbReference>
<dbReference type="HOGENOM" id="CLU_052037_0_0_6"/>
<dbReference type="Proteomes" id="UP000001410">
    <property type="component" value="Chromosome"/>
</dbReference>
<dbReference type="GO" id="GO:0005737">
    <property type="term" value="C:cytoplasm"/>
    <property type="evidence" value="ECO:0007669"/>
    <property type="project" value="UniProtKB-SubCell"/>
</dbReference>
<dbReference type="GO" id="GO:0005524">
    <property type="term" value="F:ATP binding"/>
    <property type="evidence" value="ECO:0007669"/>
    <property type="project" value="UniProtKB-KW"/>
</dbReference>
<dbReference type="GO" id="GO:0000902">
    <property type="term" value="P:cell morphogenesis"/>
    <property type="evidence" value="ECO:0007669"/>
    <property type="project" value="InterPro"/>
</dbReference>
<dbReference type="GO" id="GO:0008360">
    <property type="term" value="P:regulation of cell shape"/>
    <property type="evidence" value="ECO:0007669"/>
    <property type="project" value="UniProtKB-UniRule"/>
</dbReference>
<dbReference type="CDD" id="cd10225">
    <property type="entry name" value="ASKHA_NBD_MreB-like"/>
    <property type="match status" value="1"/>
</dbReference>
<dbReference type="FunFam" id="3.30.420.40:FF:000014">
    <property type="entry name" value="Rod shape-determining protein MreB"/>
    <property type="match status" value="1"/>
</dbReference>
<dbReference type="FunFam" id="3.30.420.40:FF:000019">
    <property type="entry name" value="Rod shape-determining protein MreB"/>
    <property type="match status" value="1"/>
</dbReference>
<dbReference type="FunFam" id="3.30.420.40:FF:000016">
    <property type="entry name" value="Rod shape-determining protein mreB"/>
    <property type="match status" value="1"/>
</dbReference>
<dbReference type="Gene3D" id="3.30.420.40">
    <property type="match status" value="3"/>
</dbReference>
<dbReference type="HAMAP" id="MF_02207">
    <property type="entry name" value="MreB"/>
    <property type="match status" value="1"/>
</dbReference>
<dbReference type="InterPro" id="IPR043129">
    <property type="entry name" value="ATPase_NBD"/>
</dbReference>
<dbReference type="InterPro" id="IPR004753">
    <property type="entry name" value="MreB"/>
</dbReference>
<dbReference type="InterPro" id="IPR056546">
    <property type="entry name" value="MreB_MamK-like"/>
</dbReference>
<dbReference type="NCBIfam" id="TIGR00904">
    <property type="entry name" value="mreB"/>
    <property type="match status" value="1"/>
</dbReference>
<dbReference type="NCBIfam" id="NF010539">
    <property type="entry name" value="PRK13927.1"/>
    <property type="match status" value="1"/>
</dbReference>
<dbReference type="PANTHER" id="PTHR42749">
    <property type="entry name" value="CELL SHAPE-DETERMINING PROTEIN MREB"/>
    <property type="match status" value="1"/>
</dbReference>
<dbReference type="PANTHER" id="PTHR42749:SF1">
    <property type="entry name" value="CELL SHAPE-DETERMINING PROTEIN MREB"/>
    <property type="match status" value="1"/>
</dbReference>
<dbReference type="Pfam" id="PF06723">
    <property type="entry name" value="MreB_Mbl"/>
    <property type="match status" value="1"/>
</dbReference>
<dbReference type="PRINTS" id="PR01652">
    <property type="entry name" value="SHAPEPROTEIN"/>
</dbReference>
<dbReference type="SUPFAM" id="SSF53067">
    <property type="entry name" value="Actin-like ATPase domain"/>
    <property type="match status" value="2"/>
</dbReference>
<sequence>MLKKFRGMFSNDLSIDLGTANTLIYVKGQGIVLNEPSVVAIRQDRAGSPKSVAAVGHDAKQMLGRTPGNIAAIRPMKDGVIADFFVTEKMLQHFIKQVHSNSFMRPSPRVLVCVPVGATQVERRAIRESAQGAGAREVFLIEEPMAAAIGAGLPVSEATGSMVVDIGGGTTEVAVISLNGVVYSSSVRIGGDRFDEAIINYVRRNYGSLIGEATAERIKHEIGSAYPGDEVREIEVRGRNLAEGVPRGFTLNSNEILEALQEPLTGIVSAVMVALEQCPPELASDISERGMVLTGGGALLRNLDRLLMEETGIPVVVAEDPLTCVARGGGKALEMIDMHGGDLFSEE</sequence>
<name>MREB_ECOL6</name>
<reference key="1">
    <citation type="journal article" date="2002" name="Proc. Natl. Acad. Sci. U.S.A.">
        <title>Extensive mosaic structure revealed by the complete genome sequence of uropathogenic Escherichia coli.</title>
        <authorList>
            <person name="Welch R.A."/>
            <person name="Burland V."/>
            <person name="Plunkett G. III"/>
            <person name="Redford P."/>
            <person name="Roesch P."/>
            <person name="Rasko D."/>
            <person name="Buckles E.L."/>
            <person name="Liou S.-R."/>
            <person name="Boutin A."/>
            <person name="Hackett J."/>
            <person name="Stroud D."/>
            <person name="Mayhew G.F."/>
            <person name="Rose D.J."/>
            <person name="Zhou S."/>
            <person name="Schwartz D.C."/>
            <person name="Perna N.T."/>
            <person name="Mobley H.L.T."/>
            <person name="Donnenberg M.S."/>
            <person name="Blattner F.R."/>
        </authorList>
    </citation>
    <scope>NUCLEOTIDE SEQUENCE [LARGE SCALE GENOMIC DNA]</scope>
    <source>
        <strain>CFT073 / ATCC 700928 / UPEC</strain>
    </source>
</reference>
<organism>
    <name type="scientific">Escherichia coli O6:H1 (strain CFT073 / ATCC 700928 / UPEC)</name>
    <dbReference type="NCBI Taxonomy" id="199310"/>
    <lineage>
        <taxon>Bacteria</taxon>
        <taxon>Pseudomonadati</taxon>
        <taxon>Pseudomonadota</taxon>
        <taxon>Gammaproteobacteria</taxon>
        <taxon>Enterobacterales</taxon>
        <taxon>Enterobacteriaceae</taxon>
        <taxon>Escherichia</taxon>
    </lineage>
</organism>
<feature type="chain" id="PRO_0000062760" description="Cell shape-determining protein MreB">
    <location>
        <begin position="1"/>
        <end position="347"/>
    </location>
</feature>
<feature type="binding site" evidence="1">
    <location>
        <begin position="19"/>
        <end position="21"/>
    </location>
    <ligand>
        <name>ATP</name>
        <dbReference type="ChEBI" id="CHEBI:30616"/>
    </ligand>
</feature>
<feature type="binding site" evidence="1">
    <location>
        <begin position="168"/>
        <end position="170"/>
    </location>
    <ligand>
        <name>ATP</name>
        <dbReference type="ChEBI" id="CHEBI:30616"/>
    </ligand>
</feature>
<feature type="binding site" evidence="1">
    <location>
        <begin position="216"/>
        <end position="219"/>
    </location>
    <ligand>
        <name>ATP</name>
        <dbReference type="ChEBI" id="CHEBI:30616"/>
    </ligand>
</feature>
<feature type="binding site" evidence="1">
    <location>
        <begin position="296"/>
        <end position="299"/>
    </location>
    <ligand>
        <name>ATP</name>
        <dbReference type="ChEBI" id="CHEBI:30616"/>
    </ligand>
</feature>
<gene>
    <name evidence="1" type="primary">mreB</name>
    <name type="ordered locus">c4006</name>
</gene>
<protein>
    <recommendedName>
        <fullName evidence="1">Cell shape-determining protein MreB</fullName>
    </recommendedName>
</protein>
<comment type="function">
    <text evidence="1">Forms membrane-associated dynamic filaments that are essential for cell shape determination. Acts by regulating cell wall synthesis and cell elongation, and thus cell shape. A feedback loop between cell geometry and MreB localization may maintain elongated cell shape by targeting cell wall growth to regions of negative cell wall curvature.</text>
</comment>
<comment type="subunit">
    <text evidence="1">Forms polymers.</text>
</comment>
<comment type="subcellular location">
    <subcellularLocation>
        <location evidence="1">Cytoplasm</location>
    </subcellularLocation>
    <text evidence="1">Membrane-associated.</text>
</comment>
<comment type="similarity">
    <text evidence="1 2">Belongs to the FtsA/MreB family.</text>
</comment>
<comment type="sequence caution" evidence="2">
    <conflict type="erroneous initiation">
        <sequence resource="EMBL-CDS" id="AAN82446"/>
    </conflict>
</comment>
<proteinExistence type="inferred from homology"/>
<keyword id="KW-0067">ATP-binding</keyword>
<keyword id="KW-0133">Cell shape</keyword>
<keyword id="KW-0963">Cytoplasm</keyword>
<keyword id="KW-0547">Nucleotide-binding</keyword>
<keyword id="KW-1185">Reference proteome</keyword>